<reference key="1">
    <citation type="journal article" date="2005" name="J. Gen. Virol.">
        <title>A novel class of herpesvirus with bivalve hosts.</title>
        <authorList>
            <person name="Davison A.J."/>
            <person name="Trus B.L."/>
            <person name="Cheng N."/>
            <person name="Steven A.C."/>
            <person name="Watson M.S."/>
            <person name="Cunningham C."/>
            <person name="Le Deuff R.M."/>
            <person name="Renault T."/>
        </authorList>
    </citation>
    <scope>NUCLEOTIDE SEQUENCE [LARGE SCALE GENOMIC DNA]</scope>
</reference>
<gene>
    <name type="ORF">ORF96</name>
</gene>
<proteinExistence type="predicted"/>
<keyword id="KW-0479">Metal-binding</keyword>
<keyword id="KW-1185">Reference proteome</keyword>
<keyword id="KW-0677">Repeat</keyword>
<keyword id="KW-0862">Zinc</keyword>
<keyword id="KW-0863">Zinc-finger</keyword>
<dbReference type="EMBL" id="AY509253">
    <property type="protein sequence ID" value="AAS00982.1"/>
    <property type="molecule type" value="Genomic_DNA"/>
</dbReference>
<dbReference type="RefSeq" id="YP_024635.1">
    <property type="nucleotide sequence ID" value="NC_005881.2"/>
</dbReference>
<dbReference type="KEGG" id="vg:2948203"/>
<dbReference type="Proteomes" id="UP000007021">
    <property type="component" value="Segment"/>
</dbReference>
<dbReference type="GO" id="GO:0008270">
    <property type="term" value="F:zinc ion binding"/>
    <property type="evidence" value="ECO:0007669"/>
    <property type="project" value="UniProtKB-KW"/>
</dbReference>
<dbReference type="CDD" id="cd16515">
    <property type="entry name" value="RING-HC_LRSAM1"/>
    <property type="match status" value="1"/>
</dbReference>
<dbReference type="Gene3D" id="3.30.40.10">
    <property type="entry name" value="Zinc/RING finger domain, C3HC4 (zinc finger)"/>
    <property type="match status" value="1"/>
</dbReference>
<dbReference type="InterPro" id="IPR001841">
    <property type="entry name" value="Znf_RING"/>
</dbReference>
<dbReference type="InterPro" id="IPR013083">
    <property type="entry name" value="Znf_RING/FYVE/PHD"/>
</dbReference>
<dbReference type="Pfam" id="PF13920">
    <property type="entry name" value="zf-C3HC4_3"/>
    <property type="match status" value="1"/>
</dbReference>
<dbReference type="SMART" id="SM00184">
    <property type="entry name" value="RING"/>
    <property type="match status" value="2"/>
</dbReference>
<dbReference type="SUPFAM" id="SSF57850">
    <property type="entry name" value="RING/U-box"/>
    <property type="match status" value="1"/>
</dbReference>
<dbReference type="PROSITE" id="PS50089">
    <property type="entry name" value="ZF_RING_2"/>
    <property type="match status" value="1"/>
</dbReference>
<protein>
    <recommendedName>
        <fullName>Putative RING finger protein ORF96</fullName>
    </recommendedName>
</protein>
<organism>
    <name type="scientific">Ostreid herpesvirus 1 (isolate France)</name>
    <name type="common">OsHV-1</name>
    <name type="synonym">Pacific oyster herpesvirus</name>
    <dbReference type="NCBI Taxonomy" id="654903"/>
    <lineage>
        <taxon>Viruses</taxon>
        <taxon>Duplodnaviria</taxon>
        <taxon>Heunggongvirae</taxon>
        <taxon>Peploviricota</taxon>
        <taxon>Herviviricetes</taxon>
        <taxon>Herpesvirales</taxon>
        <taxon>Malacoherpesviridae</taxon>
        <taxon>Ostreavirus</taxon>
        <taxon>Ostreavirus ostreidmalaco1</taxon>
        <taxon>Ostreid herpesvirus 1</taxon>
    </lineage>
</organism>
<organismHost>
    <name type="scientific">Magallana gigas</name>
    <name type="common">Pacific oyster</name>
    <name type="synonym">Crassostrea gigas</name>
    <dbReference type="NCBI Taxonomy" id="29159"/>
</organismHost>
<organismHost>
    <name type="scientific">Pecten maximus</name>
    <name type="common">King scallop</name>
    <name type="synonym">Pilgrim's clam</name>
    <dbReference type="NCBI Taxonomy" id="6579"/>
</organismHost>
<name>Y096_OSHVF</name>
<sequence length="240" mass="27177">MANYDSNECVVCMEEKPLVVFEPCMHHNCCESCSGHVSNCPYCRADITGVYLEASVKVKLEPCEHIVKLIKITEKKCSTCDQDTTGMVIVDGKLTKTFKAENYRNAARLKNIIAMLIKAAKARNNRPGFFRKMKFGIPSVFTNYIHLDSCVICKKEIKEEVGKTYMHACCTATICKPCAKAILKAMVEKEITENLPFCPYCFTKTPIKYGLNAEGELLDPPSDSFSYYYVNEYMKMINNQ</sequence>
<evidence type="ECO:0000255" key="1">
    <source>
        <dbReference type="PROSITE-ProRule" id="PRU00175"/>
    </source>
</evidence>
<feature type="chain" id="PRO_0000385031" description="Putative RING finger protein ORF96">
    <location>
        <begin position="1"/>
        <end position="240"/>
    </location>
</feature>
<feature type="zinc finger region" description="RING-type 1" evidence="1">
    <location>
        <begin position="9"/>
        <end position="44"/>
    </location>
</feature>
<feature type="zinc finger region" description="RING-type 2; degenerate" evidence="1">
    <location>
        <begin position="150"/>
        <end position="202"/>
    </location>
</feature>
<accession>Q6R7D3</accession>